<accession>P0CW47</accession>
<accession>P71525</accession>
<feature type="chain" id="PRO_0000408200" description="Nitrogen fixation nifHD region glnB-like protein 2">
    <location>
        <begin position="1"/>
        <end position="121"/>
    </location>
</feature>
<keyword id="KW-0535">Nitrogen fixation</keyword>
<keyword id="KW-1185">Reference proteome</keyword>
<keyword id="KW-0804">Transcription</keyword>
<keyword id="KW-0805">Transcription regulation</keyword>
<evidence type="ECO:0000250" key="1"/>
<evidence type="ECO:0000255" key="2">
    <source>
        <dbReference type="PROSITE-ProRule" id="PRU00675"/>
    </source>
</evidence>
<dbReference type="EMBL" id="BX950229">
    <property type="protein sequence ID" value="CAF30411.1"/>
    <property type="molecule type" value="Genomic_DNA"/>
</dbReference>
<dbReference type="RefSeq" id="WP_011170799.1">
    <property type="nucleotide sequence ID" value="NC_005791.1"/>
</dbReference>
<dbReference type="SMR" id="P0CW47"/>
<dbReference type="STRING" id="267377.MMP0855"/>
<dbReference type="EnsemblBacteria" id="CAF30411">
    <property type="protein sequence ID" value="CAF30411"/>
    <property type="gene ID" value="MMP0855"/>
</dbReference>
<dbReference type="KEGG" id="mmp:MMP0855"/>
<dbReference type="PATRIC" id="fig|267377.15.peg.880"/>
<dbReference type="eggNOG" id="arCOG02308">
    <property type="taxonomic scope" value="Archaea"/>
</dbReference>
<dbReference type="HOGENOM" id="CLU_082268_0_0_2"/>
<dbReference type="OrthoDB" id="10960at2157"/>
<dbReference type="Proteomes" id="UP000000590">
    <property type="component" value="Chromosome"/>
</dbReference>
<dbReference type="GO" id="GO:0005829">
    <property type="term" value="C:cytosol"/>
    <property type="evidence" value="ECO:0007669"/>
    <property type="project" value="TreeGrafter"/>
</dbReference>
<dbReference type="GO" id="GO:0005524">
    <property type="term" value="F:ATP binding"/>
    <property type="evidence" value="ECO:0007669"/>
    <property type="project" value="TreeGrafter"/>
</dbReference>
<dbReference type="GO" id="GO:0030234">
    <property type="term" value="F:enzyme regulator activity"/>
    <property type="evidence" value="ECO:0007669"/>
    <property type="project" value="InterPro"/>
</dbReference>
<dbReference type="GO" id="GO:0009399">
    <property type="term" value="P:nitrogen fixation"/>
    <property type="evidence" value="ECO:0007669"/>
    <property type="project" value="UniProtKB-KW"/>
</dbReference>
<dbReference type="GO" id="GO:0006808">
    <property type="term" value="P:regulation of nitrogen utilization"/>
    <property type="evidence" value="ECO:0007669"/>
    <property type="project" value="InterPro"/>
</dbReference>
<dbReference type="Gene3D" id="3.30.70.120">
    <property type="match status" value="1"/>
</dbReference>
<dbReference type="InterPro" id="IPR002187">
    <property type="entry name" value="N-reg_PII"/>
</dbReference>
<dbReference type="InterPro" id="IPR011322">
    <property type="entry name" value="N-reg_PII-like_a/b"/>
</dbReference>
<dbReference type="InterPro" id="IPR015867">
    <property type="entry name" value="N-reg_PII/ATP_PRibTrfase_C"/>
</dbReference>
<dbReference type="InterPro" id="IPR017918">
    <property type="entry name" value="N-reg_PII_CS"/>
</dbReference>
<dbReference type="PANTHER" id="PTHR30115">
    <property type="entry name" value="NITROGEN REGULATORY PROTEIN P-II"/>
    <property type="match status" value="1"/>
</dbReference>
<dbReference type="PANTHER" id="PTHR30115:SF11">
    <property type="entry name" value="NITROGEN REGULATORY PROTEIN P-II HOMOLOG"/>
    <property type="match status" value="1"/>
</dbReference>
<dbReference type="Pfam" id="PF00543">
    <property type="entry name" value="P-II"/>
    <property type="match status" value="1"/>
</dbReference>
<dbReference type="PRINTS" id="PR00340">
    <property type="entry name" value="PIIGLNB"/>
</dbReference>
<dbReference type="SMART" id="SM00938">
    <property type="entry name" value="P-II"/>
    <property type="match status" value="1"/>
</dbReference>
<dbReference type="SUPFAM" id="SSF54913">
    <property type="entry name" value="GlnB-like"/>
    <property type="match status" value="1"/>
</dbReference>
<dbReference type="PROSITE" id="PS00638">
    <property type="entry name" value="PII_GLNB_CTER"/>
    <property type="match status" value="1"/>
</dbReference>
<dbReference type="PROSITE" id="PS51343">
    <property type="entry name" value="PII_GLNB_DOM"/>
    <property type="match status" value="1"/>
</dbReference>
<sequence length="121" mass="13233">MKEIIAIIRPSKMAQTKTVLEGLGFPAMTANRVLGRGKQKAIVGELGFEVDNKELLNQPGDMRYIPKTMLTLIVPDEDASLVVEAIMKVNKSGQYGDGKIFVCPIEDIITVRTSERGEAAI</sequence>
<gene>
    <name type="primary">glnBII</name>
    <name type="synonym">nifI2</name>
    <name type="ordered locus">MMP0855</name>
</gene>
<proteinExistence type="inferred from homology"/>
<reference key="1">
    <citation type="journal article" date="2004" name="J. Bacteriol.">
        <title>Complete genome sequence of the genetically tractable hydrogenotrophic methanogen Methanococcus maripaludis.</title>
        <authorList>
            <person name="Hendrickson E.L."/>
            <person name="Kaul R."/>
            <person name="Zhou Y."/>
            <person name="Bovee D."/>
            <person name="Chapman P."/>
            <person name="Chung J."/>
            <person name="Conway de Macario E."/>
            <person name="Dodsworth J.A."/>
            <person name="Gillett W."/>
            <person name="Graham D.E."/>
            <person name="Hackett M."/>
            <person name="Haydock A.K."/>
            <person name="Kang A."/>
            <person name="Land M.L."/>
            <person name="Levy R."/>
            <person name="Lie T.J."/>
            <person name="Major T.A."/>
            <person name="Moore B.C."/>
            <person name="Porat I."/>
            <person name="Palmeiri A."/>
            <person name="Rouse G."/>
            <person name="Saenphimmachak C."/>
            <person name="Soell D."/>
            <person name="Van Dien S."/>
            <person name="Wang T."/>
            <person name="Whitman W.B."/>
            <person name="Xia Q."/>
            <person name="Zhang Y."/>
            <person name="Larimer F.W."/>
            <person name="Olson M.V."/>
            <person name="Leigh J.A."/>
        </authorList>
    </citation>
    <scope>NUCLEOTIDE SEQUENCE [LARGE SCALE GENOMIC DNA]</scope>
    <source>
        <strain>DSM 14266 / JCM 13030 / NBRC 101832 / S2 / LL</strain>
    </source>
</reference>
<name>GLNB2_METMP</name>
<comment type="function">
    <text evidence="1">Could be involved in the regulation of nitrogen fixation.</text>
</comment>
<comment type="similarity">
    <text evidence="2">Belongs to the P(II) protein family.</text>
</comment>
<protein>
    <recommendedName>
        <fullName>Nitrogen fixation nifHD region glnB-like protein 2</fullName>
    </recommendedName>
</protein>
<organism>
    <name type="scientific">Methanococcus maripaludis (strain DSM 14266 / JCM 13030 / NBRC 101832 / S2 / LL)</name>
    <dbReference type="NCBI Taxonomy" id="267377"/>
    <lineage>
        <taxon>Archaea</taxon>
        <taxon>Methanobacteriati</taxon>
        <taxon>Methanobacteriota</taxon>
        <taxon>Methanomada group</taxon>
        <taxon>Methanococci</taxon>
        <taxon>Methanococcales</taxon>
        <taxon>Methanococcaceae</taxon>
        <taxon>Methanococcus</taxon>
    </lineage>
</organism>